<gene>
    <name evidence="1" type="primary">tusA</name>
    <name type="ordered locus">PM1496</name>
</gene>
<reference key="1">
    <citation type="journal article" date="2001" name="Proc. Natl. Acad. Sci. U.S.A.">
        <title>Complete genomic sequence of Pasteurella multocida Pm70.</title>
        <authorList>
            <person name="May B.J."/>
            <person name="Zhang Q."/>
            <person name="Li L.L."/>
            <person name="Paustian M.L."/>
            <person name="Whittam T.S."/>
            <person name="Kapur V."/>
        </authorList>
    </citation>
    <scope>NUCLEOTIDE SEQUENCE [LARGE SCALE GENOMIC DNA]</scope>
    <source>
        <strain>Pm70</strain>
    </source>
</reference>
<feature type="chain" id="PRO_0000159042" description="Sulfur carrier protein TusA">
    <location>
        <begin position="1"/>
        <end position="79"/>
    </location>
</feature>
<feature type="active site" description="Cysteine persulfide intermediate" evidence="1">
    <location>
        <position position="17"/>
    </location>
</feature>
<accession>Q9CKV9</accession>
<keyword id="KW-0963">Cytoplasm</keyword>
<keyword id="KW-1185">Reference proteome</keyword>
<organism>
    <name type="scientific">Pasteurella multocida (strain Pm70)</name>
    <dbReference type="NCBI Taxonomy" id="272843"/>
    <lineage>
        <taxon>Bacteria</taxon>
        <taxon>Pseudomonadati</taxon>
        <taxon>Pseudomonadota</taxon>
        <taxon>Gammaproteobacteria</taxon>
        <taxon>Pasteurellales</taxon>
        <taxon>Pasteurellaceae</taxon>
        <taxon>Pasteurella</taxon>
    </lineage>
</organism>
<dbReference type="EMBL" id="AE004439">
    <property type="protein sequence ID" value="AAK03580.1"/>
    <property type="molecule type" value="Genomic_DNA"/>
</dbReference>
<dbReference type="RefSeq" id="WP_005718056.1">
    <property type="nucleotide sequence ID" value="NC_002663.1"/>
</dbReference>
<dbReference type="SMR" id="Q9CKV9"/>
<dbReference type="STRING" id="272843.PM1496"/>
<dbReference type="EnsemblBacteria" id="AAK03580">
    <property type="protein sequence ID" value="AAK03580"/>
    <property type="gene ID" value="PM1496"/>
</dbReference>
<dbReference type="GeneID" id="77206944"/>
<dbReference type="KEGG" id="pmu:PM1496"/>
<dbReference type="HOGENOM" id="CLU_165255_5_1_6"/>
<dbReference type="OrthoDB" id="9797352at2"/>
<dbReference type="Proteomes" id="UP000000809">
    <property type="component" value="Chromosome"/>
</dbReference>
<dbReference type="GO" id="GO:0005737">
    <property type="term" value="C:cytoplasm"/>
    <property type="evidence" value="ECO:0007669"/>
    <property type="project" value="UniProtKB-SubCell"/>
</dbReference>
<dbReference type="GO" id="GO:0097163">
    <property type="term" value="F:sulfur carrier activity"/>
    <property type="evidence" value="ECO:0007669"/>
    <property type="project" value="UniProtKB-UniRule"/>
</dbReference>
<dbReference type="GO" id="GO:0002143">
    <property type="term" value="P:tRNA wobble position uridine thiolation"/>
    <property type="evidence" value="ECO:0007669"/>
    <property type="project" value="InterPro"/>
</dbReference>
<dbReference type="Gene3D" id="3.30.110.40">
    <property type="entry name" value="TusA-like domain"/>
    <property type="match status" value="1"/>
</dbReference>
<dbReference type="HAMAP" id="MF_00413">
    <property type="entry name" value="Thiourid_synth_A"/>
    <property type="match status" value="1"/>
</dbReference>
<dbReference type="InterPro" id="IPR022931">
    <property type="entry name" value="Sulphur_carrier_TusA"/>
</dbReference>
<dbReference type="InterPro" id="IPR001455">
    <property type="entry name" value="TusA-like"/>
</dbReference>
<dbReference type="InterPro" id="IPR036868">
    <property type="entry name" value="TusA-like_sf"/>
</dbReference>
<dbReference type="NCBIfam" id="NF001423">
    <property type="entry name" value="PRK00299.1"/>
    <property type="match status" value="1"/>
</dbReference>
<dbReference type="PANTHER" id="PTHR33279:SF2">
    <property type="entry name" value="SULFUR CARRIER PROTEIN TUSA"/>
    <property type="match status" value="1"/>
</dbReference>
<dbReference type="PANTHER" id="PTHR33279">
    <property type="entry name" value="SULFUR CARRIER PROTEIN YEDF-RELATED"/>
    <property type="match status" value="1"/>
</dbReference>
<dbReference type="Pfam" id="PF01206">
    <property type="entry name" value="TusA"/>
    <property type="match status" value="1"/>
</dbReference>
<dbReference type="SUPFAM" id="SSF64307">
    <property type="entry name" value="SirA-like"/>
    <property type="match status" value="1"/>
</dbReference>
<dbReference type="PROSITE" id="PS01148">
    <property type="entry name" value="UPF0033"/>
    <property type="match status" value="1"/>
</dbReference>
<evidence type="ECO:0000255" key="1">
    <source>
        <dbReference type="HAMAP-Rule" id="MF_00413"/>
    </source>
</evidence>
<proteinExistence type="inferred from homology"/>
<sequence length="79" mass="9239">MNEIRVTQTLDTLGLRCPEPVMLVRKHIRFLEEGDVLLVIADDPATTRDIPSFCQFMEHTLLKSEIEHIPFQYWVKKGK</sequence>
<name>TUSA_PASMU</name>
<comment type="function">
    <text evidence="1">Sulfur carrier protein which probably makes part of a sulfur-relay system.</text>
</comment>
<comment type="subcellular location">
    <subcellularLocation>
        <location evidence="1">Cytoplasm</location>
    </subcellularLocation>
</comment>
<comment type="similarity">
    <text evidence="1">Belongs to the sulfur carrier protein TusA family.</text>
</comment>
<protein>
    <recommendedName>
        <fullName evidence="1">Sulfur carrier protein TusA</fullName>
    </recommendedName>
</protein>